<sequence>MEKIKIIVASDSIGETAELVARAGISQFNPKQCKNELLRYPYIESFEDVDEVIQVAKDTNAIIVYTLIKPEMKQYMSEKVAEFQLKSVDIMGPLMDLLSASVEEKPYNEPGIVHRLDDAYFKKIDAIEFAVKYDDGKDPKGLPKADIVLLGISRTSKTPLSQYLAHKSYKVMNVPIVPEVTPPDGLYDINPKKCIALKISEEKLNRIRKERLKQLGLGDTARYATEARIQEELNYFEEIVSEIGCPVIDVSQKAIEETANDIIHYIEQNKSK</sequence>
<accession>A6QHA6</accession>
<keyword id="KW-0418">Kinase</keyword>
<keyword id="KW-0547">Nucleotide-binding</keyword>
<keyword id="KW-0723">Serine/threonine-protein kinase</keyword>
<keyword id="KW-0808">Transferase</keyword>
<gene>
    <name type="ordered locus">NWMN_1466</name>
</gene>
<organism>
    <name type="scientific">Staphylococcus aureus (strain Newman)</name>
    <dbReference type="NCBI Taxonomy" id="426430"/>
    <lineage>
        <taxon>Bacteria</taxon>
        <taxon>Bacillati</taxon>
        <taxon>Bacillota</taxon>
        <taxon>Bacilli</taxon>
        <taxon>Bacillales</taxon>
        <taxon>Staphylococcaceae</taxon>
        <taxon>Staphylococcus</taxon>
    </lineage>
</organism>
<protein>
    <recommendedName>
        <fullName evidence="1">Putative pyruvate, phosphate dikinase regulatory protein</fullName>
        <shortName evidence="1">PPDK regulatory protein</shortName>
        <ecNumber evidence="1">2.7.11.32</ecNumber>
        <ecNumber evidence="1">2.7.4.27</ecNumber>
    </recommendedName>
</protein>
<feature type="chain" id="PRO_0000316749" description="Putative pyruvate, phosphate dikinase regulatory protein">
    <location>
        <begin position="1"/>
        <end position="272"/>
    </location>
</feature>
<feature type="binding site" evidence="1">
    <location>
        <begin position="151"/>
        <end position="158"/>
    </location>
    <ligand>
        <name>ADP</name>
        <dbReference type="ChEBI" id="CHEBI:456216"/>
    </ligand>
</feature>
<evidence type="ECO:0000255" key="1">
    <source>
        <dbReference type="HAMAP-Rule" id="MF_00921"/>
    </source>
</evidence>
<comment type="function">
    <text evidence="1">Bifunctional serine/threonine kinase and phosphorylase involved in the regulation of the pyruvate, phosphate dikinase (PPDK) by catalyzing its phosphorylation/dephosphorylation.</text>
</comment>
<comment type="catalytic activity">
    <reaction evidence="1">
        <text>N(tele)-phospho-L-histidyl/L-threonyl-[pyruvate, phosphate dikinase] + ADP = N(tele)-phospho-L-histidyl/O-phospho-L-threonyl-[pyruvate, phosphate dikinase] + AMP + H(+)</text>
        <dbReference type="Rhea" id="RHEA:43692"/>
        <dbReference type="Rhea" id="RHEA-COMP:10650"/>
        <dbReference type="Rhea" id="RHEA-COMP:10651"/>
        <dbReference type="ChEBI" id="CHEBI:15378"/>
        <dbReference type="ChEBI" id="CHEBI:30013"/>
        <dbReference type="ChEBI" id="CHEBI:61977"/>
        <dbReference type="ChEBI" id="CHEBI:83586"/>
        <dbReference type="ChEBI" id="CHEBI:456215"/>
        <dbReference type="ChEBI" id="CHEBI:456216"/>
        <dbReference type="EC" id="2.7.11.32"/>
    </reaction>
</comment>
<comment type="catalytic activity">
    <reaction evidence="1">
        <text>N(tele)-phospho-L-histidyl/O-phospho-L-threonyl-[pyruvate, phosphate dikinase] + phosphate + H(+) = N(tele)-phospho-L-histidyl/L-threonyl-[pyruvate, phosphate dikinase] + diphosphate</text>
        <dbReference type="Rhea" id="RHEA:43696"/>
        <dbReference type="Rhea" id="RHEA-COMP:10650"/>
        <dbReference type="Rhea" id="RHEA-COMP:10651"/>
        <dbReference type="ChEBI" id="CHEBI:15378"/>
        <dbReference type="ChEBI" id="CHEBI:30013"/>
        <dbReference type="ChEBI" id="CHEBI:33019"/>
        <dbReference type="ChEBI" id="CHEBI:43474"/>
        <dbReference type="ChEBI" id="CHEBI:61977"/>
        <dbReference type="ChEBI" id="CHEBI:83586"/>
        <dbReference type="EC" id="2.7.4.27"/>
    </reaction>
</comment>
<comment type="similarity">
    <text evidence="1">Belongs to the pyruvate, phosphate/water dikinase regulatory protein family. PDRP subfamily.</text>
</comment>
<dbReference type="EC" id="2.7.11.32" evidence="1"/>
<dbReference type="EC" id="2.7.4.27" evidence="1"/>
<dbReference type="EMBL" id="AP009351">
    <property type="protein sequence ID" value="BAF67738.1"/>
    <property type="molecule type" value="Genomic_DNA"/>
</dbReference>
<dbReference type="RefSeq" id="WP_000411299.1">
    <property type="nucleotide sequence ID" value="NZ_JBBIAE010000001.1"/>
</dbReference>
<dbReference type="SMR" id="A6QHA6"/>
<dbReference type="KEGG" id="sae:NWMN_1466"/>
<dbReference type="HOGENOM" id="CLU_046206_2_1_9"/>
<dbReference type="Proteomes" id="UP000006386">
    <property type="component" value="Chromosome"/>
</dbReference>
<dbReference type="GO" id="GO:0043531">
    <property type="term" value="F:ADP binding"/>
    <property type="evidence" value="ECO:0007669"/>
    <property type="project" value="UniProtKB-UniRule"/>
</dbReference>
<dbReference type="GO" id="GO:0005524">
    <property type="term" value="F:ATP binding"/>
    <property type="evidence" value="ECO:0007669"/>
    <property type="project" value="InterPro"/>
</dbReference>
<dbReference type="GO" id="GO:0016776">
    <property type="term" value="F:phosphotransferase activity, phosphate group as acceptor"/>
    <property type="evidence" value="ECO:0007669"/>
    <property type="project" value="UniProtKB-UniRule"/>
</dbReference>
<dbReference type="GO" id="GO:0004674">
    <property type="term" value="F:protein serine/threonine kinase activity"/>
    <property type="evidence" value="ECO:0007669"/>
    <property type="project" value="UniProtKB-UniRule"/>
</dbReference>
<dbReference type="HAMAP" id="MF_00921">
    <property type="entry name" value="PDRP"/>
    <property type="match status" value="1"/>
</dbReference>
<dbReference type="InterPro" id="IPR005177">
    <property type="entry name" value="Kinase-pyrophosphorylase"/>
</dbReference>
<dbReference type="InterPro" id="IPR026565">
    <property type="entry name" value="PPDK_reg"/>
</dbReference>
<dbReference type="NCBIfam" id="NF003742">
    <property type="entry name" value="PRK05339.1"/>
    <property type="match status" value="1"/>
</dbReference>
<dbReference type="PANTHER" id="PTHR31756">
    <property type="entry name" value="PYRUVATE, PHOSPHATE DIKINASE REGULATORY PROTEIN 1, CHLOROPLASTIC"/>
    <property type="match status" value="1"/>
</dbReference>
<dbReference type="PANTHER" id="PTHR31756:SF3">
    <property type="entry name" value="PYRUVATE, PHOSPHATE DIKINASE REGULATORY PROTEIN 1, CHLOROPLASTIC"/>
    <property type="match status" value="1"/>
</dbReference>
<dbReference type="Pfam" id="PF03618">
    <property type="entry name" value="Kinase-PPPase"/>
    <property type="match status" value="1"/>
</dbReference>
<name>PDRP_STAAE</name>
<proteinExistence type="inferred from homology"/>
<reference key="1">
    <citation type="journal article" date="2008" name="J. Bacteriol.">
        <title>Genome sequence of Staphylococcus aureus strain Newman and comparative analysis of staphylococcal genomes: polymorphism and evolution of two major pathogenicity islands.</title>
        <authorList>
            <person name="Baba T."/>
            <person name="Bae T."/>
            <person name="Schneewind O."/>
            <person name="Takeuchi F."/>
            <person name="Hiramatsu K."/>
        </authorList>
    </citation>
    <scope>NUCLEOTIDE SEQUENCE [LARGE SCALE GENOMIC DNA]</scope>
    <source>
        <strain>Newman</strain>
    </source>
</reference>